<keyword id="KW-1003">Cell membrane</keyword>
<keyword id="KW-0444">Lipid biosynthesis</keyword>
<keyword id="KW-0443">Lipid metabolism</keyword>
<keyword id="KW-0460">Magnesium</keyword>
<keyword id="KW-0472">Membrane</keyword>
<keyword id="KW-0594">Phospholipid biosynthesis</keyword>
<keyword id="KW-1208">Phospholipid metabolism</keyword>
<keyword id="KW-0808">Transferase</keyword>
<keyword id="KW-0812">Transmembrane</keyword>
<keyword id="KW-1133">Transmembrane helix</keyword>
<feature type="chain" id="PRO_1000213610" description="CDP-archaeol synthase">
    <location>
        <begin position="1"/>
        <end position="166"/>
    </location>
</feature>
<feature type="transmembrane region" description="Helical" evidence="1">
    <location>
        <begin position="7"/>
        <end position="27"/>
    </location>
</feature>
<feature type="transmembrane region" description="Helical" evidence="1">
    <location>
        <begin position="55"/>
        <end position="75"/>
    </location>
</feature>
<feature type="transmembrane region" description="Helical" evidence="1">
    <location>
        <begin position="78"/>
        <end position="98"/>
    </location>
</feature>
<feature type="transmembrane region" description="Helical" evidence="1">
    <location>
        <begin position="116"/>
        <end position="136"/>
    </location>
</feature>
<feature type="transmembrane region" description="Helical" evidence="1">
    <location>
        <begin position="138"/>
        <end position="158"/>
    </location>
</feature>
<protein>
    <recommendedName>
        <fullName evidence="1">CDP-archaeol synthase</fullName>
        <ecNumber evidence="1">2.7.7.67</ecNumber>
    </recommendedName>
    <alternativeName>
        <fullName evidence="1">CDP-2,3-bis-(O-geranylgeranyl)-sn-glycerol synthase</fullName>
    </alternativeName>
</protein>
<organism>
    <name type="scientific">Saccharolobus islandicus (strain Y.G.57.14 / Yellowstone #1)</name>
    <name type="common">Sulfolobus islandicus</name>
    <dbReference type="NCBI Taxonomy" id="439386"/>
    <lineage>
        <taxon>Archaea</taxon>
        <taxon>Thermoproteota</taxon>
        <taxon>Thermoprotei</taxon>
        <taxon>Sulfolobales</taxon>
        <taxon>Sulfolobaceae</taxon>
        <taxon>Saccharolobus</taxon>
    </lineage>
</organism>
<sequence length="166" mass="18484">MSIAYDLLLSILIYLPAFVANGSGPFIKRGTPIDFGKNFVDGRRLFGDGKTFEGLIVALTFGTTVGVIISKFFTAEWTLISFLESLFAMIGDMIGAFIKRRLGIPRGGRVLGLDQLDFVLGASLILVLMRVNITWYQFLFICGLAFFLHQGTNYVAYLLKIKNVPW</sequence>
<name>CDPAS_SACI7</name>
<reference key="1">
    <citation type="journal article" date="2009" name="Proc. Natl. Acad. Sci. U.S.A.">
        <title>Biogeography of the Sulfolobus islandicus pan-genome.</title>
        <authorList>
            <person name="Reno M.L."/>
            <person name="Held N.L."/>
            <person name="Fields C.J."/>
            <person name="Burke P.V."/>
            <person name="Whitaker R.J."/>
        </authorList>
    </citation>
    <scope>NUCLEOTIDE SEQUENCE [LARGE SCALE GENOMIC DNA]</scope>
    <source>
        <strain>Y.G.57.14 / Yellowstone #1</strain>
    </source>
</reference>
<accession>C3NE86</accession>
<dbReference type="EC" id="2.7.7.67" evidence="1"/>
<dbReference type="EMBL" id="CP001403">
    <property type="protein sequence ID" value="ACP45625.1"/>
    <property type="molecule type" value="Genomic_DNA"/>
</dbReference>
<dbReference type="RefSeq" id="WP_010923068.1">
    <property type="nucleotide sequence ID" value="NC_012622.1"/>
</dbReference>
<dbReference type="SMR" id="C3NE86"/>
<dbReference type="KEGG" id="siy:YG5714_1358"/>
<dbReference type="HOGENOM" id="CLU_105710_0_0_2"/>
<dbReference type="UniPathway" id="UPA00940"/>
<dbReference type="Proteomes" id="UP000002308">
    <property type="component" value="Chromosome"/>
</dbReference>
<dbReference type="GO" id="GO:0005886">
    <property type="term" value="C:plasma membrane"/>
    <property type="evidence" value="ECO:0007669"/>
    <property type="project" value="UniProtKB-SubCell"/>
</dbReference>
<dbReference type="GO" id="GO:0043338">
    <property type="term" value="F:CDP-2,3-bis-(O-geranylgeranyl)-sn-glycerol synthase activity"/>
    <property type="evidence" value="ECO:0007669"/>
    <property type="project" value="UniProtKB-EC"/>
</dbReference>
<dbReference type="GO" id="GO:0046474">
    <property type="term" value="P:glycerophospholipid biosynthetic process"/>
    <property type="evidence" value="ECO:0007669"/>
    <property type="project" value="UniProtKB-UniRule"/>
</dbReference>
<dbReference type="HAMAP" id="MF_01117">
    <property type="entry name" value="CDP_archaeol_synth"/>
    <property type="match status" value="1"/>
</dbReference>
<dbReference type="InterPro" id="IPR032690">
    <property type="entry name" value="CarS"/>
</dbReference>
<dbReference type="InterPro" id="IPR002726">
    <property type="entry name" value="CarS_archaea"/>
</dbReference>
<dbReference type="NCBIfam" id="NF003114">
    <property type="entry name" value="PRK04032.1"/>
    <property type="match status" value="1"/>
</dbReference>
<dbReference type="PANTHER" id="PTHR39650">
    <property type="entry name" value="CDP-ARCHAEOL SYNTHASE"/>
    <property type="match status" value="1"/>
</dbReference>
<dbReference type="PANTHER" id="PTHR39650:SF1">
    <property type="entry name" value="CDP-ARCHAEOL SYNTHASE"/>
    <property type="match status" value="1"/>
</dbReference>
<dbReference type="Pfam" id="PF01864">
    <property type="entry name" value="CarS-like"/>
    <property type="match status" value="1"/>
</dbReference>
<evidence type="ECO:0000255" key="1">
    <source>
        <dbReference type="HAMAP-Rule" id="MF_01117"/>
    </source>
</evidence>
<gene>
    <name evidence="1" type="primary">carS</name>
    <name type="ordered locus">YG5714_1358</name>
</gene>
<proteinExistence type="inferred from homology"/>
<comment type="function">
    <text evidence="1">Catalyzes the formation of CDP-2,3-bis-(O-geranylgeranyl)-sn-glycerol (CDP-archaeol) from 2,3-bis-(O-geranylgeranyl)-sn-glycerol 1-phosphate (DGGGP) and CTP. This reaction is the third ether-bond-formation step in the biosynthesis of archaeal membrane lipids.</text>
</comment>
<comment type="catalytic activity">
    <reaction evidence="1">
        <text>2,3-bis-O-(geranylgeranyl)-sn-glycerol 1-phosphate + CTP + H(+) = CDP-2,3-bis-O-(geranylgeranyl)-sn-glycerol + diphosphate</text>
        <dbReference type="Rhea" id="RHEA:25690"/>
        <dbReference type="ChEBI" id="CHEBI:15378"/>
        <dbReference type="ChEBI" id="CHEBI:33019"/>
        <dbReference type="ChEBI" id="CHEBI:37563"/>
        <dbReference type="ChEBI" id="CHEBI:58837"/>
        <dbReference type="ChEBI" id="CHEBI:58838"/>
        <dbReference type="EC" id="2.7.7.67"/>
    </reaction>
</comment>
<comment type="cofactor">
    <cofactor evidence="1">
        <name>Mg(2+)</name>
        <dbReference type="ChEBI" id="CHEBI:18420"/>
    </cofactor>
</comment>
<comment type="pathway">
    <text evidence="1">Membrane lipid metabolism; glycerophospholipid metabolism.</text>
</comment>
<comment type="subcellular location">
    <subcellularLocation>
        <location evidence="1">Cell membrane</location>
        <topology evidence="1">Multi-pass membrane protein</topology>
    </subcellularLocation>
</comment>
<comment type="similarity">
    <text evidence="1">Belongs to the CDP-archaeol synthase family.</text>
</comment>